<comment type="catalytic activity">
    <reaction evidence="1">
        <text>urea + 2 H2O + H(+) = hydrogencarbonate + 2 NH4(+)</text>
        <dbReference type="Rhea" id="RHEA:20557"/>
        <dbReference type="ChEBI" id="CHEBI:15377"/>
        <dbReference type="ChEBI" id="CHEBI:15378"/>
        <dbReference type="ChEBI" id="CHEBI:16199"/>
        <dbReference type="ChEBI" id="CHEBI:17544"/>
        <dbReference type="ChEBI" id="CHEBI:28938"/>
        <dbReference type="EC" id="3.5.1.5"/>
    </reaction>
</comment>
<comment type="cofactor">
    <cofactor evidence="1">
        <name>Ni cation</name>
        <dbReference type="ChEBI" id="CHEBI:25516"/>
    </cofactor>
    <text evidence="1">Binds 2 nickel ions per subunit.</text>
</comment>
<comment type="pathway">
    <text evidence="1">Nitrogen metabolism; urea degradation; CO(2) and NH(3) from urea (urease route): step 1/1.</text>
</comment>
<comment type="subunit">
    <text evidence="1">May form a heterohexamer of 3 UreC (alpha) and 3 UreAB (gamma/beta) subunits. May also form a heterotrimer of UreA (gamma), UreB (beta) and UreC (alpha) subunits. Three heterotrimers associate to form the active enzyme.</text>
</comment>
<comment type="subcellular location">
    <subcellularLocation>
        <location evidence="1">Cytoplasm</location>
    </subcellularLocation>
</comment>
<comment type="PTM">
    <text evidence="1">Carboxylation allows a single lysine to coordinate two nickel ions.</text>
</comment>
<comment type="similarity">
    <text evidence="1">Belongs to the metallo-dependent hydrolases superfamily. Urease alpha subunit family.</text>
</comment>
<evidence type="ECO:0000255" key="1">
    <source>
        <dbReference type="HAMAP-Rule" id="MF_01953"/>
    </source>
</evidence>
<dbReference type="EC" id="3.5.1.5" evidence="1"/>
<dbReference type="EMBL" id="BA000030">
    <property type="protein sequence ID" value="BAC70426.1"/>
    <property type="molecule type" value="Genomic_DNA"/>
</dbReference>
<dbReference type="RefSeq" id="WP_010984147.1">
    <property type="nucleotide sequence ID" value="NZ_JZJK01000071.1"/>
</dbReference>
<dbReference type="SMR" id="Q82JN9"/>
<dbReference type="GeneID" id="41539804"/>
<dbReference type="KEGG" id="sma:SAVERM_2715"/>
<dbReference type="eggNOG" id="COG0804">
    <property type="taxonomic scope" value="Bacteria"/>
</dbReference>
<dbReference type="HOGENOM" id="CLU_000980_2_0_11"/>
<dbReference type="OrthoDB" id="9802793at2"/>
<dbReference type="UniPathway" id="UPA00258">
    <property type="reaction ID" value="UER00370"/>
</dbReference>
<dbReference type="Proteomes" id="UP000000428">
    <property type="component" value="Chromosome"/>
</dbReference>
<dbReference type="GO" id="GO:0005737">
    <property type="term" value="C:cytoplasm"/>
    <property type="evidence" value="ECO:0007669"/>
    <property type="project" value="UniProtKB-SubCell"/>
</dbReference>
<dbReference type="GO" id="GO:0016151">
    <property type="term" value="F:nickel cation binding"/>
    <property type="evidence" value="ECO:0007669"/>
    <property type="project" value="UniProtKB-UniRule"/>
</dbReference>
<dbReference type="GO" id="GO:0009039">
    <property type="term" value="F:urease activity"/>
    <property type="evidence" value="ECO:0007669"/>
    <property type="project" value="UniProtKB-UniRule"/>
</dbReference>
<dbReference type="GO" id="GO:0043419">
    <property type="term" value="P:urea catabolic process"/>
    <property type="evidence" value="ECO:0007669"/>
    <property type="project" value="UniProtKB-UniRule"/>
</dbReference>
<dbReference type="Gene3D" id="3.20.20.140">
    <property type="entry name" value="Metal-dependent hydrolases"/>
    <property type="match status" value="1"/>
</dbReference>
<dbReference type="Gene3D" id="2.30.40.10">
    <property type="entry name" value="Urease, subunit C, domain 1"/>
    <property type="match status" value="1"/>
</dbReference>
<dbReference type="HAMAP" id="MF_01953">
    <property type="entry name" value="Urease_alpha"/>
    <property type="match status" value="1"/>
</dbReference>
<dbReference type="InterPro" id="IPR006680">
    <property type="entry name" value="Amidohydro-rel"/>
</dbReference>
<dbReference type="InterPro" id="IPR011059">
    <property type="entry name" value="Metal-dep_hydrolase_composite"/>
</dbReference>
<dbReference type="InterPro" id="IPR032466">
    <property type="entry name" value="Metal_Hydrolase"/>
</dbReference>
<dbReference type="InterPro" id="IPR011612">
    <property type="entry name" value="Urease_alpha_N_dom"/>
</dbReference>
<dbReference type="InterPro" id="IPR050112">
    <property type="entry name" value="Urease_alpha_subunit"/>
</dbReference>
<dbReference type="InterPro" id="IPR005848">
    <property type="entry name" value="Urease_asu"/>
</dbReference>
<dbReference type="InterPro" id="IPR017951">
    <property type="entry name" value="Urease_asu_c"/>
</dbReference>
<dbReference type="InterPro" id="IPR029754">
    <property type="entry name" value="Urease_Ni-bd"/>
</dbReference>
<dbReference type="NCBIfam" id="NF009686">
    <property type="entry name" value="PRK13207.1"/>
    <property type="match status" value="1"/>
</dbReference>
<dbReference type="PANTHER" id="PTHR43440">
    <property type="entry name" value="UREASE"/>
    <property type="match status" value="1"/>
</dbReference>
<dbReference type="PANTHER" id="PTHR43440:SF1">
    <property type="entry name" value="UREASE"/>
    <property type="match status" value="1"/>
</dbReference>
<dbReference type="Pfam" id="PF01979">
    <property type="entry name" value="Amidohydro_1"/>
    <property type="match status" value="1"/>
</dbReference>
<dbReference type="Pfam" id="PF00449">
    <property type="entry name" value="Urease_alpha"/>
    <property type="match status" value="1"/>
</dbReference>
<dbReference type="PRINTS" id="PR01752">
    <property type="entry name" value="UREASE"/>
</dbReference>
<dbReference type="SUPFAM" id="SSF51338">
    <property type="entry name" value="Composite domain of metallo-dependent hydrolases"/>
    <property type="match status" value="1"/>
</dbReference>
<dbReference type="SUPFAM" id="SSF51556">
    <property type="entry name" value="Metallo-dependent hydrolases"/>
    <property type="match status" value="1"/>
</dbReference>
<dbReference type="PROSITE" id="PS01120">
    <property type="entry name" value="UREASE_1"/>
    <property type="match status" value="1"/>
</dbReference>
<dbReference type="PROSITE" id="PS51368">
    <property type="entry name" value="UREASE_3"/>
    <property type="match status" value="1"/>
</dbReference>
<keyword id="KW-0963">Cytoplasm</keyword>
<keyword id="KW-0378">Hydrolase</keyword>
<keyword id="KW-0479">Metal-binding</keyword>
<keyword id="KW-0533">Nickel</keyword>
<keyword id="KW-1185">Reference proteome</keyword>
<feature type="chain" id="PRO_0000234185" description="Urease subunit alpha 1">
    <location>
        <begin position="1"/>
        <end position="556"/>
    </location>
</feature>
<feature type="domain" description="Urease" evidence="1">
    <location>
        <begin position="127"/>
        <end position="556"/>
    </location>
</feature>
<feature type="active site" description="Proton donor" evidence="1">
    <location>
        <position position="315"/>
    </location>
</feature>
<feature type="binding site" evidence="1">
    <location>
        <position position="132"/>
    </location>
    <ligand>
        <name>Ni(2+)</name>
        <dbReference type="ChEBI" id="CHEBI:49786"/>
        <label>1</label>
    </ligand>
</feature>
<feature type="binding site" evidence="1">
    <location>
        <position position="134"/>
    </location>
    <ligand>
        <name>Ni(2+)</name>
        <dbReference type="ChEBI" id="CHEBI:49786"/>
        <label>1</label>
    </ligand>
</feature>
<feature type="binding site" description="via carbamate group" evidence="1">
    <location>
        <position position="212"/>
    </location>
    <ligand>
        <name>Ni(2+)</name>
        <dbReference type="ChEBI" id="CHEBI:49786"/>
        <label>1</label>
    </ligand>
</feature>
<feature type="binding site" description="via carbamate group" evidence="1">
    <location>
        <position position="212"/>
    </location>
    <ligand>
        <name>Ni(2+)</name>
        <dbReference type="ChEBI" id="CHEBI:49786"/>
        <label>2</label>
    </ligand>
</feature>
<feature type="binding site" evidence="1">
    <location>
        <position position="214"/>
    </location>
    <ligand>
        <name>substrate</name>
    </ligand>
</feature>
<feature type="binding site" evidence="1">
    <location>
        <position position="241"/>
    </location>
    <ligand>
        <name>Ni(2+)</name>
        <dbReference type="ChEBI" id="CHEBI:49786"/>
        <label>2</label>
    </ligand>
</feature>
<feature type="binding site" evidence="1">
    <location>
        <position position="267"/>
    </location>
    <ligand>
        <name>Ni(2+)</name>
        <dbReference type="ChEBI" id="CHEBI:49786"/>
        <label>2</label>
    </ligand>
</feature>
<feature type="binding site" evidence="1">
    <location>
        <position position="355"/>
    </location>
    <ligand>
        <name>Ni(2+)</name>
        <dbReference type="ChEBI" id="CHEBI:49786"/>
        <label>1</label>
    </ligand>
</feature>
<feature type="modified residue" description="N6-carboxylysine" evidence="1">
    <location>
        <position position="212"/>
    </location>
</feature>
<accession>Q82JN9</accession>
<proteinExistence type="inferred from homology"/>
<sequence length="556" mass="58203">MNPYAYAATHGPRAGDRVRLGDSGLTIRVESDAQQYGDEFLAGFGKTARDGLHLKAAAVRDTCDVVISNVVVIDAAQGIRKVSIGIREGRICSIGRAGNPDTLAGVDVVVGTGTSIVSGEGLIATAGAVDTHVHLLSPRIMEASLASGVTTVIGQEFGPVWGVGVNSPWALRHAFSAFDAWPVNIGFLGRGSSSDPAPLVEALAEGGASGFKVHEDMGAHTRALDTALRVAEEHDVQVALHSDGLNECLSVEDTLRVLDGRTIHAFHIEGCGGGHVPNVLKMAGVPNVIGSSTNPTLPFGRDAVAEHYGMIVSVHDLKPDLPGDAAMARDRIRAGTMGAEDVLHDLGAIGITSSDAQGMGRAGETVRRTFAMAGKMKAEFGAPEDHDNARVLRYLAKLTINPALAHGLAHEVGSIEVGKLADIVLWRPEFFGAKPQLVLKSGFPAYGVVGDPNAATDTCEPLVLGPQFGAHGATPAEISVAFVAQAALDQGNDRMPTRRRRVAVRGTRGIGPADLRLNSRTGAVDVDQRTGLVTLDGDPIRSEPADSVSLNRLYFL</sequence>
<name>URE11_STRAW</name>
<protein>
    <recommendedName>
        <fullName evidence="1">Urease subunit alpha 1</fullName>
        <ecNumber evidence="1">3.5.1.5</ecNumber>
    </recommendedName>
    <alternativeName>
        <fullName evidence="1">Urea amidohydrolase subunit alpha 1</fullName>
    </alternativeName>
</protein>
<reference key="1">
    <citation type="journal article" date="2001" name="Proc. Natl. Acad. Sci. U.S.A.">
        <title>Genome sequence of an industrial microorganism Streptomyces avermitilis: deducing the ability of producing secondary metabolites.</title>
        <authorList>
            <person name="Omura S."/>
            <person name="Ikeda H."/>
            <person name="Ishikawa J."/>
            <person name="Hanamoto A."/>
            <person name="Takahashi C."/>
            <person name="Shinose M."/>
            <person name="Takahashi Y."/>
            <person name="Horikawa H."/>
            <person name="Nakazawa H."/>
            <person name="Osonoe T."/>
            <person name="Kikuchi H."/>
            <person name="Shiba T."/>
            <person name="Sakaki Y."/>
            <person name="Hattori M."/>
        </authorList>
    </citation>
    <scope>NUCLEOTIDE SEQUENCE [LARGE SCALE GENOMIC DNA]</scope>
    <source>
        <strain>ATCC 31267 / DSM 46492 / JCM 5070 / NBRC 14893 / NCIMB 12804 / NRRL 8165 / MA-4680</strain>
    </source>
</reference>
<reference key="2">
    <citation type="journal article" date="2003" name="Nat. Biotechnol.">
        <title>Complete genome sequence and comparative analysis of the industrial microorganism Streptomyces avermitilis.</title>
        <authorList>
            <person name="Ikeda H."/>
            <person name="Ishikawa J."/>
            <person name="Hanamoto A."/>
            <person name="Shinose M."/>
            <person name="Kikuchi H."/>
            <person name="Shiba T."/>
            <person name="Sakaki Y."/>
            <person name="Hattori M."/>
            <person name="Omura S."/>
        </authorList>
    </citation>
    <scope>NUCLEOTIDE SEQUENCE [LARGE SCALE GENOMIC DNA]</scope>
    <source>
        <strain>ATCC 31267 / DSM 46492 / JCM 5070 / NBRC 14893 / NCIMB 12804 / NRRL 8165 / MA-4680</strain>
    </source>
</reference>
<gene>
    <name evidence="1" type="primary">ureC1</name>
    <name type="ordered locus">SAV_2715</name>
</gene>
<organism>
    <name type="scientific">Streptomyces avermitilis (strain ATCC 31267 / DSM 46492 / JCM 5070 / NBRC 14893 / NCIMB 12804 / NRRL 8165 / MA-4680)</name>
    <dbReference type="NCBI Taxonomy" id="227882"/>
    <lineage>
        <taxon>Bacteria</taxon>
        <taxon>Bacillati</taxon>
        <taxon>Actinomycetota</taxon>
        <taxon>Actinomycetes</taxon>
        <taxon>Kitasatosporales</taxon>
        <taxon>Streptomycetaceae</taxon>
        <taxon>Streptomyces</taxon>
    </lineage>
</organism>